<dbReference type="EC" id="3.1.2.-"/>
<dbReference type="EMBL" id="X93605">
    <property type="protein sequence ID" value="CAA63809.1"/>
    <property type="molecule type" value="Genomic_DNA"/>
</dbReference>
<dbReference type="EMBL" id="AE008692">
    <property type="protein sequence ID" value="AAV89135.1"/>
    <property type="molecule type" value="Genomic_DNA"/>
</dbReference>
<dbReference type="RefSeq" id="WP_011240415.1">
    <property type="nucleotide sequence ID" value="NZ_CP035711.1"/>
</dbReference>
<dbReference type="SMR" id="O66120"/>
<dbReference type="STRING" id="264203.ZMO0511"/>
<dbReference type="KEGG" id="zmo:ZMO0511"/>
<dbReference type="eggNOG" id="COG1607">
    <property type="taxonomic scope" value="Bacteria"/>
</dbReference>
<dbReference type="HOGENOM" id="CLU_050164_2_0_5"/>
<dbReference type="Proteomes" id="UP000001173">
    <property type="component" value="Chromosome"/>
</dbReference>
<dbReference type="GO" id="GO:0005829">
    <property type="term" value="C:cytosol"/>
    <property type="evidence" value="ECO:0007669"/>
    <property type="project" value="TreeGrafter"/>
</dbReference>
<dbReference type="GO" id="GO:0052816">
    <property type="term" value="F:long-chain fatty acyl-CoA hydrolase activity"/>
    <property type="evidence" value="ECO:0007669"/>
    <property type="project" value="TreeGrafter"/>
</dbReference>
<dbReference type="GO" id="GO:0006637">
    <property type="term" value="P:acyl-CoA metabolic process"/>
    <property type="evidence" value="ECO:0007669"/>
    <property type="project" value="TreeGrafter"/>
</dbReference>
<dbReference type="GO" id="GO:0009062">
    <property type="term" value="P:fatty acid catabolic process"/>
    <property type="evidence" value="ECO:0007669"/>
    <property type="project" value="TreeGrafter"/>
</dbReference>
<dbReference type="CDD" id="cd03442">
    <property type="entry name" value="BFIT_BACH"/>
    <property type="match status" value="1"/>
</dbReference>
<dbReference type="Gene3D" id="3.10.129.10">
    <property type="entry name" value="Hotdog Thioesterase"/>
    <property type="match status" value="1"/>
</dbReference>
<dbReference type="InterPro" id="IPR040170">
    <property type="entry name" value="Cytosol_ACT"/>
</dbReference>
<dbReference type="InterPro" id="IPR033120">
    <property type="entry name" value="HOTDOG_ACOT"/>
</dbReference>
<dbReference type="InterPro" id="IPR029069">
    <property type="entry name" value="HotDog_dom_sf"/>
</dbReference>
<dbReference type="InterPro" id="IPR006683">
    <property type="entry name" value="Thioestr_dom"/>
</dbReference>
<dbReference type="PANTHER" id="PTHR11049">
    <property type="entry name" value="ACYL COENZYME A THIOESTER HYDROLASE"/>
    <property type="match status" value="1"/>
</dbReference>
<dbReference type="PANTHER" id="PTHR11049:SF5">
    <property type="entry name" value="ACYL-COA THIOESTER HYDROLASE YCIA"/>
    <property type="match status" value="1"/>
</dbReference>
<dbReference type="Pfam" id="PF03061">
    <property type="entry name" value="4HBT"/>
    <property type="match status" value="1"/>
</dbReference>
<dbReference type="SUPFAM" id="SSF54637">
    <property type="entry name" value="Thioesterase/thiol ester dehydrase-isomerase"/>
    <property type="match status" value="1"/>
</dbReference>
<dbReference type="PROSITE" id="PS51770">
    <property type="entry name" value="HOTDOG_ACOT"/>
    <property type="match status" value="1"/>
</dbReference>
<protein>
    <recommendedName>
        <fullName>Uncharacterized acyl-CoA thioester hydrolase ZMO0511</fullName>
        <ecNumber>3.1.2.-</ecNumber>
    </recommendedName>
</protein>
<comment type="similarity">
    <text evidence="2">Belongs to the acyl coenzyme A hydrolase family.</text>
</comment>
<name>Y511_ZYMMO</name>
<feature type="chain" id="PRO_0000053826" description="Uncharacterized acyl-CoA thioester hydrolase ZMO0511">
    <location>
        <begin position="1"/>
        <end position="149"/>
    </location>
</feature>
<feature type="domain" description="HotDog ACOT-type" evidence="1">
    <location>
        <begin position="16"/>
        <end position="128"/>
    </location>
</feature>
<keyword id="KW-0378">Hydrolase</keyword>
<keyword id="KW-1185">Reference proteome</keyword>
<reference key="1">
    <citation type="journal article" date="1998" name="J. Bacteriol.">
        <title>Purification of the pyruvate dehydrogenase multienzyme complex of Zymomonas mobilis and identification and sequence analysis of the corresponding genes.</title>
        <authorList>
            <person name="Neveling U."/>
            <person name="Klasen R."/>
            <person name="Bringer-Meyer S."/>
            <person name="Sahm H."/>
        </authorList>
    </citation>
    <scope>NUCLEOTIDE SEQUENCE [GENOMIC DNA]</scope>
    <source>
        <strain>ATCC 29191 / DSM 3580 / JCM 10190 / CECT 560 / NBRC 13756 / NCIMB 11199 / NRRL B-4490 / ZM6</strain>
    </source>
</reference>
<reference key="2">
    <citation type="journal article" date="2005" name="Nat. Biotechnol.">
        <title>The genome sequence of the ethanologenic bacterium Zymomonas mobilis ZM4.</title>
        <authorList>
            <person name="Seo J.-S."/>
            <person name="Chong H."/>
            <person name="Park H.S."/>
            <person name="Yoon K.-O."/>
            <person name="Jung C."/>
            <person name="Kim J.J."/>
            <person name="Hong J.H."/>
            <person name="Kim H."/>
            <person name="Kim J.-H."/>
            <person name="Kil J.-I."/>
            <person name="Park C.J."/>
            <person name="Oh H.-M."/>
            <person name="Lee J.-S."/>
            <person name="Jin S.-J."/>
            <person name="Um H.-W."/>
            <person name="Lee H.-J."/>
            <person name="Oh S.-J."/>
            <person name="Kim J.Y."/>
            <person name="Kang H.L."/>
            <person name="Lee S.Y."/>
            <person name="Lee K.J."/>
            <person name="Kang H.S."/>
        </authorList>
    </citation>
    <scope>NUCLEOTIDE SEQUENCE [LARGE SCALE GENOMIC DNA]</scope>
    <source>
        <strain>ATCC 31821 / ZM4 / CP4</strain>
    </source>
</reference>
<proteinExistence type="inferred from homology"/>
<gene>
    <name type="ordered locus">ZMO0511</name>
</gene>
<evidence type="ECO:0000255" key="1">
    <source>
        <dbReference type="PROSITE-ProRule" id="PRU01106"/>
    </source>
</evidence>
<evidence type="ECO:0000305" key="2"/>
<sequence length="149" mass="16241">MSNQVTKSDNSEPLAPAGEPAIRVIAMPANTNADGRMFGGWLMGMLDQAAGLVAARHALARVVTVAADSITFHAPVQVGDELSLYARLVKVGRTSMKIEVEGWRRVRHELETIKAISGLFTFVAIDEDRRPCQVPPMNETRLLSDKADK</sequence>
<organism>
    <name type="scientific">Zymomonas mobilis subsp. mobilis (strain ATCC 31821 / ZM4 / CP4)</name>
    <dbReference type="NCBI Taxonomy" id="264203"/>
    <lineage>
        <taxon>Bacteria</taxon>
        <taxon>Pseudomonadati</taxon>
        <taxon>Pseudomonadota</taxon>
        <taxon>Alphaproteobacteria</taxon>
        <taxon>Sphingomonadales</taxon>
        <taxon>Zymomonadaceae</taxon>
        <taxon>Zymomonas</taxon>
    </lineage>
</organism>
<accession>O66120</accession>
<accession>Q5NQ70</accession>